<comment type="function">
    <text evidence="1">Acts as a molecular chaperone for mitochondrial complex I assembly. Complex I functions in the transfer of electrons from NADH to the respiratory chain. The immediate electron acceptor for the enzyme is believed to be ubiquinone. Is involved in the initial steps of cilia formation, including removal of CP110 from the mother centrioles, docking of membrane vesicles to the mother centrioles, and establishment of the transition zone.</text>
</comment>
<comment type="subunit">
    <text evidence="1">Interacts with ARMC9.</text>
</comment>
<comment type="subcellular location">
    <subcellularLocation>
        <location evidence="1">Mitochondrion</location>
    </subcellularLocation>
</comment>
<comment type="similarity">
    <text evidence="4">Belongs to the complex I NDUFA12 subunit family.</text>
</comment>
<dbReference type="EMBL" id="BC108241">
    <property type="protein sequence ID" value="AAI08242.1"/>
    <property type="molecule type" value="mRNA"/>
</dbReference>
<dbReference type="RefSeq" id="NP_001070497.1">
    <property type="nucleotide sequence ID" value="NM_001077029.2"/>
</dbReference>
<dbReference type="SMR" id="Q32P65"/>
<dbReference type="FunCoup" id="Q32P65">
    <property type="interactions" value="1224"/>
</dbReference>
<dbReference type="STRING" id="9913.ENSBTAP00000028793"/>
<dbReference type="PaxDb" id="9913-ENSBTAP00000028793"/>
<dbReference type="GeneID" id="767961"/>
<dbReference type="KEGG" id="bta:767961"/>
<dbReference type="CTD" id="91942"/>
<dbReference type="eggNOG" id="ENOG502S21I">
    <property type="taxonomic scope" value="Eukaryota"/>
</dbReference>
<dbReference type="InParanoid" id="Q32P65"/>
<dbReference type="OrthoDB" id="10255576at2759"/>
<dbReference type="Proteomes" id="UP000009136">
    <property type="component" value="Unplaced"/>
</dbReference>
<dbReference type="GO" id="GO:0005739">
    <property type="term" value="C:mitochondrion"/>
    <property type="evidence" value="ECO:0000318"/>
    <property type="project" value="GO_Central"/>
</dbReference>
<dbReference type="GO" id="GO:0045271">
    <property type="term" value="C:respiratory chain complex I"/>
    <property type="evidence" value="ECO:0007669"/>
    <property type="project" value="InterPro"/>
</dbReference>
<dbReference type="GO" id="GO:0060271">
    <property type="term" value="P:cilium assembly"/>
    <property type="evidence" value="ECO:0000250"/>
    <property type="project" value="UniProtKB"/>
</dbReference>
<dbReference type="GO" id="GO:0032981">
    <property type="term" value="P:mitochondrial respiratory chain complex I assembly"/>
    <property type="evidence" value="ECO:0000318"/>
    <property type="project" value="GO_Central"/>
</dbReference>
<dbReference type="InterPro" id="IPR052618">
    <property type="entry name" value="ComplexI_NDUFA12"/>
</dbReference>
<dbReference type="InterPro" id="IPR007763">
    <property type="entry name" value="NDUFA12"/>
</dbReference>
<dbReference type="PANTHER" id="PTHR32470">
    <property type="entry name" value="ADH DEHYDROGENASE [UBIQUINONE] 1 ALPHA SUBCOMPLEX ASSEMBLY FACTOR 2"/>
    <property type="match status" value="1"/>
</dbReference>
<dbReference type="PANTHER" id="PTHR32470:SF2">
    <property type="entry name" value="NADH DEHYDROGENASE [UBIQUINONE] 1 ALPHA SUBCOMPLEX ASSEMBLY FACTOR 2"/>
    <property type="match status" value="1"/>
</dbReference>
<dbReference type="Pfam" id="PF05071">
    <property type="entry name" value="NDUFA12"/>
    <property type="match status" value="1"/>
</dbReference>
<keyword id="KW-0143">Chaperone</keyword>
<keyword id="KW-0970">Cilium biogenesis/degradation</keyword>
<keyword id="KW-0496">Mitochondrion</keyword>
<keyword id="KW-0597">Phosphoprotein</keyword>
<keyword id="KW-1185">Reference proteome</keyword>
<keyword id="KW-0809">Transit peptide</keyword>
<evidence type="ECO:0000250" key="1">
    <source>
        <dbReference type="UniProtKB" id="Q8N183"/>
    </source>
</evidence>
<evidence type="ECO:0000255" key="2"/>
<evidence type="ECO:0000256" key="3">
    <source>
        <dbReference type="SAM" id="MobiDB-lite"/>
    </source>
</evidence>
<evidence type="ECO:0000305" key="4"/>
<feature type="transit peptide" description="Mitochondrion" evidence="2">
    <location>
        <begin position="1"/>
        <end status="unknown"/>
    </location>
</feature>
<feature type="chain" id="PRO_0000270195" description="NADH dehydrogenase [ubiquinone] 1 alpha subcomplex assembly factor 2">
    <location>
        <begin status="unknown"/>
        <end position="168"/>
    </location>
</feature>
<feature type="region of interest" description="Disordered" evidence="3">
    <location>
        <begin position="108"/>
        <end position="168"/>
    </location>
</feature>
<feature type="compositionally biased region" description="Basic and acidic residues" evidence="3">
    <location>
        <begin position="108"/>
        <end position="118"/>
    </location>
</feature>
<feature type="compositionally biased region" description="Polar residues" evidence="3">
    <location>
        <begin position="144"/>
        <end position="155"/>
    </location>
</feature>
<feature type="modified residue" description="Phosphoserine" evidence="1">
    <location>
        <position position="133"/>
    </location>
</feature>
<protein>
    <recommendedName>
        <fullName>NADH dehydrogenase [ubiquinone] 1 alpha subcomplex assembly factor 2</fullName>
    </recommendedName>
    <alternativeName>
        <fullName evidence="1">Mimitin</fullName>
    </alternativeName>
    <alternativeName>
        <fullName evidence="1">Myc-induced mitochondrial protein</fullName>
        <shortName evidence="1">MMTN</shortName>
    </alternativeName>
    <alternativeName>
        <fullName>NDUFA12-like protein</fullName>
    </alternativeName>
</protein>
<organism>
    <name type="scientific">Bos taurus</name>
    <name type="common">Bovine</name>
    <dbReference type="NCBI Taxonomy" id="9913"/>
    <lineage>
        <taxon>Eukaryota</taxon>
        <taxon>Metazoa</taxon>
        <taxon>Chordata</taxon>
        <taxon>Craniata</taxon>
        <taxon>Vertebrata</taxon>
        <taxon>Euteleostomi</taxon>
        <taxon>Mammalia</taxon>
        <taxon>Eutheria</taxon>
        <taxon>Laurasiatheria</taxon>
        <taxon>Artiodactyla</taxon>
        <taxon>Ruminantia</taxon>
        <taxon>Pecora</taxon>
        <taxon>Bovidae</taxon>
        <taxon>Bovinae</taxon>
        <taxon>Bos</taxon>
    </lineage>
</organism>
<proteinExistence type="evidence at transcript level"/>
<reference key="1">
    <citation type="submission" date="2005-10" db="EMBL/GenBank/DDBJ databases">
        <authorList>
            <consortium name="NIH - Mammalian Gene Collection (MGC) project"/>
        </authorList>
    </citation>
    <scope>NUCLEOTIDE SEQUENCE [LARGE SCALE MRNA]</scope>
    <source>
        <strain>Crossbred X Angus</strain>
        <tissue>Liver</tissue>
    </source>
</reference>
<sequence length="168" mass="19658">MGWSQRLFGVIRRALSKEVKEQVGTDRFGNKYYYIPEYKNWRGQTIREKRIVEAANKSEIDYEVGDIPTEWEAWIRKTRQTPPTMEEIMKNEKCREEIQMKSQDFYEKEKLLQEESNKELPPPVQTQIKGHASAPYFGKDEPSESPTSTGKTFQPGSWMPHGDKGHSQ</sequence>
<gene>
    <name type="primary">NDUFAF2</name>
    <name type="synonym">NDUFA12L</name>
</gene>
<accession>Q32P65</accession>
<name>NDUF2_BOVIN</name>